<organism>
    <name type="scientific">Candida tropicalis</name>
    <name type="common">Yeast</name>
    <dbReference type="NCBI Taxonomy" id="5482"/>
    <lineage>
        <taxon>Eukaryota</taxon>
        <taxon>Fungi</taxon>
        <taxon>Dikarya</taxon>
        <taxon>Ascomycota</taxon>
        <taxon>Saccharomycotina</taxon>
        <taxon>Pichiomycetes</taxon>
        <taxon>Debaryomycetaceae</taxon>
        <taxon>Candida/Lodderomyces clade</taxon>
        <taxon>Candida</taxon>
    </lineage>
</organism>
<dbReference type="EC" id="4.1.1.23"/>
<dbReference type="EMBL" id="AF040702">
    <property type="protein sequence ID" value="AAB96773.1"/>
    <property type="molecule type" value="Genomic_DNA"/>
</dbReference>
<dbReference type="SMR" id="O42771"/>
<dbReference type="VEuPathDB" id="FungiDB:CTMYA2_051200"/>
<dbReference type="VEuPathDB" id="FungiDB:CTRG_02175"/>
<dbReference type="UniPathway" id="UPA00070">
    <property type="reaction ID" value="UER00120"/>
</dbReference>
<dbReference type="GO" id="GO:0005829">
    <property type="term" value="C:cytosol"/>
    <property type="evidence" value="ECO:0007669"/>
    <property type="project" value="EnsemblFungi"/>
</dbReference>
<dbReference type="GO" id="GO:0004590">
    <property type="term" value="F:orotidine-5'-phosphate decarboxylase activity"/>
    <property type="evidence" value="ECO:0007669"/>
    <property type="project" value="UniProtKB-EC"/>
</dbReference>
<dbReference type="GO" id="GO:0006207">
    <property type="term" value="P:'de novo' pyrimidine nucleobase biosynthetic process"/>
    <property type="evidence" value="ECO:0007669"/>
    <property type="project" value="EnsemblFungi"/>
</dbReference>
<dbReference type="GO" id="GO:0044205">
    <property type="term" value="P:'de novo' UMP biosynthetic process"/>
    <property type="evidence" value="ECO:0007669"/>
    <property type="project" value="UniProtKB-UniPathway"/>
</dbReference>
<dbReference type="CDD" id="cd04725">
    <property type="entry name" value="OMP_decarboxylase_like"/>
    <property type="match status" value="1"/>
</dbReference>
<dbReference type="FunFam" id="3.20.20.70:FF:000114">
    <property type="entry name" value="Decarboxylase,orotidine phosphate"/>
    <property type="match status" value="1"/>
</dbReference>
<dbReference type="Gene3D" id="3.20.20.70">
    <property type="entry name" value="Aldolase class I"/>
    <property type="match status" value="1"/>
</dbReference>
<dbReference type="InterPro" id="IPR013785">
    <property type="entry name" value="Aldolase_TIM"/>
</dbReference>
<dbReference type="InterPro" id="IPR014732">
    <property type="entry name" value="OMPdecase"/>
</dbReference>
<dbReference type="InterPro" id="IPR018089">
    <property type="entry name" value="OMPdecase_AS"/>
</dbReference>
<dbReference type="InterPro" id="IPR001754">
    <property type="entry name" value="OMPdeCOase_dom"/>
</dbReference>
<dbReference type="InterPro" id="IPR011060">
    <property type="entry name" value="RibuloseP-bd_barrel"/>
</dbReference>
<dbReference type="NCBIfam" id="TIGR01740">
    <property type="entry name" value="pyrF"/>
    <property type="match status" value="1"/>
</dbReference>
<dbReference type="PANTHER" id="PTHR32119">
    <property type="entry name" value="OROTIDINE 5'-PHOSPHATE DECARBOXYLASE"/>
    <property type="match status" value="1"/>
</dbReference>
<dbReference type="PANTHER" id="PTHR32119:SF2">
    <property type="entry name" value="OROTIDINE 5'-PHOSPHATE DECARBOXYLASE"/>
    <property type="match status" value="1"/>
</dbReference>
<dbReference type="Pfam" id="PF00215">
    <property type="entry name" value="OMPdecase"/>
    <property type="match status" value="1"/>
</dbReference>
<dbReference type="SMART" id="SM00934">
    <property type="entry name" value="OMPdecase"/>
    <property type="match status" value="1"/>
</dbReference>
<dbReference type="SUPFAM" id="SSF51366">
    <property type="entry name" value="Ribulose-phoshate binding barrel"/>
    <property type="match status" value="1"/>
</dbReference>
<dbReference type="PROSITE" id="PS00156">
    <property type="entry name" value="OMPDECASE"/>
    <property type="match status" value="1"/>
</dbReference>
<proteinExistence type="inferred from homology"/>
<keyword id="KW-0210">Decarboxylase</keyword>
<keyword id="KW-0456">Lyase</keyword>
<keyword id="KW-0665">Pyrimidine biosynthesis</keyword>
<feature type="chain" id="PRO_0000134654" description="Orotidine 5'-phosphate decarboxylase">
    <location>
        <begin position="1"/>
        <end position="268"/>
    </location>
</feature>
<feature type="active site" description="Proton donor" evidence="2">
    <location>
        <position position="94"/>
    </location>
</feature>
<feature type="binding site" evidence="1">
    <location>
        <position position="38"/>
    </location>
    <ligand>
        <name>substrate</name>
    </ligand>
</feature>
<feature type="binding site" evidence="1">
    <location>
        <begin position="60"/>
        <end position="62"/>
    </location>
    <ligand>
        <name>substrate</name>
    </ligand>
</feature>
<feature type="binding site" evidence="1">
    <location>
        <begin position="92"/>
        <end position="101"/>
    </location>
    <ligand>
        <name>substrate</name>
    </ligand>
</feature>
<feature type="binding site" evidence="1">
    <location>
        <position position="218"/>
    </location>
    <ligand>
        <name>substrate</name>
    </ligand>
</feature>
<feature type="binding site" evidence="1">
    <location>
        <position position="236"/>
    </location>
    <ligand>
        <name>substrate</name>
    </ligand>
</feature>
<reference key="1">
    <citation type="journal article" date="1998" name="Curr. Microbiol.">
        <title>Cloning and sequence analysis of the Candida tropicalis URA3 gene encoding orotidine-5'-phosphate decarboxylase.</title>
        <authorList>
            <person name="Su J.-H."/>
            <person name="Hsia J.-H."/>
            <person name="Chang M.-C."/>
        </authorList>
    </citation>
    <scope>NUCLEOTIDE SEQUENCE [GENOMIC DNA]</scope>
    <source>
        <strain>M4</strain>
    </source>
</reference>
<accession>O42771</accession>
<sequence length="268" mass="29672">MVNTETYTERASKHPSKVAQRLFQLMESKKTNLCASIDVPTTKEFLSLIDKLGPFICLVKTHIDIISDFSYEGTILPLIELSKKHNFMIFEDRKFADIGNTVKLQYTSGVYKISSWSDITNAHGVTGKGGVEGLKKGADETTNEPRGLLMLAELSSKGSLAYGEYTNKTIEIAKSDKEFVIGFIAQRDMGGHDQGFDWIIMTPGVGLDDKGDALGQQYRTVDEVISTGTDVIIVGRGLFGKGRDPEVEGKRYREAGWNAYLKKNGQLE</sequence>
<name>PYRF_CANTR</name>
<evidence type="ECO:0000250" key="1"/>
<evidence type="ECO:0000255" key="2">
    <source>
        <dbReference type="PROSITE-ProRule" id="PRU10110"/>
    </source>
</evidence>
<evidence type="ECO:0000305" key="3"/>
<gene>
    <name type="primary">URA3</name>
</gene>
<protein>
    <recommendedName>
        <fullName>Orotidine 5'-phosphate decarboxylase</fullName>
        <ecNumber>4.1.1.23</ecNumber>
    </recommendedName>
    <alternativeName>
        <fullName>OMP decarboxylase</fullName>
        <shortName>OMPDCase</shortName>
        <shortName>OMPdecase</shortName>
    </alternativeName>
    <alternativeName>
        <fullName>Uridine 5'-monophosphate synthase</fullName>
        <shortName>UMP synthase</shortName>
    </alternativeName>
</protein>
<comment type="catalytic activity">
    <reaction evidence="2">
        <text>orotidine 5'-phosphate + H(+) = UMP + CO2</text>
        <dbReference type="Rhea" id="RHEA:11596"/>
        <dbReference type="ChEBI" id="CHEBI:15378"/>
        <dbReference type="ChEBI" id="CHEBI:16526"/>
        <dbReference type="ChEBI" id="CHEBI:57538"/>
        <dbReference type="ChEBI" id="CHEBI:57865"/>
        <dbReference type="EC" id="4.1.1.23"/>
    </reaction>
</comment>
<comment type="pathway">
    <text>Pyrimidine metabolism; UMP biosynthesis via de novo pathway; UMP from orotate: step 2/2.</text>
</comment>
<comment type="similarity">
    <text evidence="3">Belongs to the OMP decarboxylase family.</text>
</comment>